<name>Y1482_HAEIN</name>
<proteinExistence type="evidence at protein level"/>
<organism>
    <name type="scientific">Haemophilus influenzae (strain ATCC 51907 / DSM 11121 / KW20 / Rd)</name>
    <dbReference type="NCBI Taxonomy" id="71421"/>
    <lineage>
        <taxon>Bacteria</taxon>
        <taxon>Pseudomonadati</taxon>
        <taxon>Pseudomonadota</taxon>
        <taxon>Gammaproteobacteria</taxon>
        <taxon>Pasteurellales</taxon>
        <taxon>Pasteurellaceae</taxon>
        <taxon>Haemophilus</taxon>
    </lineage>
</organism>
<gene>
    <name type="ordered locus">HI_1482</name>
</gene>
<feature type="chain" id="PRO_0000078067" description="Uncharacterized protein HI_1482">
    <location>
        <begin position="1"/>
        <end position="105"/>
    </location>
</feature>
<accession>P44210</accession>
<sequence>MQKVYNKMAGEMMSPRNAVIHNQLAMLELATLECEALGIEVETVEWFDIGKPRLVVKDCSALRHLIKTGKAFNYGSEVKNGIRIYLNQMMVKGVKFIWKSDVTKH</sequence>
<dbReference type="EMBL" id="L42023">
    <property type="protein sequence ID" value="AAC23138.1"/>
    <property type="molecule type" value="Genomic_DNA"/>
</dbReference>
<dbReference type="PIR" id="D64031">
    <property type="entry name" value="D64031"/>
</dbReference>
<dbReference type="RefSeq" id="NP_439633.1">
    <property type="nucleotide sequence ID" value="NC_000907.1"/>
</dbReference>
<dbReference type="STRING" id="71421.HI_1482"/>
<dbReference type="EnsemblBacteria" id="AAC23138">
    <property type="protein sequence ID" value="AAC23138"/>
    <property type="gene ID" value="HI_1482"/>
</dbReference>
<dbReference type="KEGG" id="hin:HI_1482"/>
<dbReference type="PATRIC" id="fig|71421.8.peg.1549"/>
<dbReference type="eggNOG" id="ENOG5031K1W">
    <property type="taxonomic scope" value="Bacteria"/>
</dbReference>
<dbReference type="HOGENOM" id="CLU_2232759_0_0_6"/>
<dbReference type="OrthoDB" id="5688654at2"/>
<dbReference type="BioCyc" id="HINF71421:G1GJ1-1507-MONOMER"/>
<dbReference type="Proteomes" id="UP000000579">
    <property type="component" value="Chromosome"/>
</dbReference>
<reference key="1">
    <citation type="journal article" date="1995" name="Science">
        <title>Whole-genome random sequencing and assembly of Haemophilus influenzae Rd.</title>
        <authorList>
            <person name="Fleischmann R.D."/>
            <person name="Adams M.D."/>
            <person name="White O."/>
            <person name="Clayton R.A."/>
            <person name="Kirkness E.F."/>
            <person name="Kerlavage A.R."/>
            <person name="Bult C.J."/>
            <person name="Tomb J.-F."/>
            <person name="Dougherty B.A."/>
            <person name="Merrick J.M."/>
            <person name="McKenney K."/>
            <person name="Sutton G.G."/>
            <person name="FitzHugh W."/>
            <person name="Fields C.A."/>
            <person name="Gocayne J.D."/>
            <person name="Scott J.D."/>
            <person name="Shirley R."/>
            <person name="Liu L.-I."/>
            <person name="Glodek A."/>
            <person name="Kelley J.M."/>
            <person name="Weidman J.F."/>
            <person name="Phillips C.A."/>
            <person name="Spriggs T."/>
            <person name="Hedblom E."/>
            <person name="Cotton M.D."/>
            <person name="Utterback T.R."/>
            <person name="Hanna M.C."/>
            <person name="Nguyen D.T."/>
            <person name="Saudek D.M."/>
            <person name="Brandon R.C."/>
            <person name="Fine L.D."/>
            <person name="Fritchman J.L."/>
            <person name="Fuhrmann J.L."/>
            <person name="Geoghagen N.S.M."/>
            <person name="Gnehm C.L."/>
            <person name="McDonald L.A."/>
            <person name="Small K.V."/>
            <person name="Fraser C.M."/>
            <person name="Smith H.O."/>
            <person name="Venter J.C."/>
        </authorList>
    </citation>
    <scope>NUCLEOTIDE SEQUENCE [LARGE SCALE GENOMIC DNA]</scope>
    <source>
        <strain>ATCC 51907 / DSM 11121 / KW20 / Rd</strain>
    </source>
</reference>
<reference key="2">
    <citation type="journal article" date="2000" name="Electrophoresis">
        <title>Two-dimensional map of the proteome of Haemophilus influenzae.</title>
        <authorList>
            <person name="Langen H."/>
            <person name="Takacs B."/>
            <person name="Evers S."/>
            <person name="Berndt P."/>
            <person name="Lahm H.W."/>
            <person name="Wipf B."/>
            <person name="Gray C."/>
            <person name="Fountoulakis M."/>
        </authorList>
    </citation>
    <scope>IDENTIFICATION BY MASS SPECTROMETRY</scope>
    <source>
        <strain>ATCC 51907 / DSM 11121 / KW20 / Rd</strain>
    </source>
</reference>
<protein>
    <recommendedName>
        <fullName>Uncharacterized protein HI_1482</fullName>
    </recommendedName>
</protein>
<keyword id="KW-1185">Reference proteome</keyword>